<comment type="function">
    <text evidence="5 7">Lytic polysaccharide monooxygenase (LPMO) that depolymerizes crystalline and amorphous polysaccharides via the oxidation of scissile alpha- or beta-(1-4)-glycosidic bonds, yielding C1 oxidation products (PubMed:27075737, PubMed:35658600). Catalysis by LPMOs requires the reduction of the active-site copper from Cu(II) to Cu(I) by a reducing agent and H(2)O(2) or O(2) as a cosubstrate (PubMed:35658600).</text>
</comment>
<comment type="catalytic activity">
    <reaction evidence="7">
        <text>[(1-&gt;4)-beta-D-glucosyl]n+m + reduced acceptor + O2 = 4-dehydro-beta-D-glucosyl-[(1-&gt;4)-beta-D-glucosyl]n-1 + [(1-&gt;4)-beta-D-glucosyl]m + acceptor + H2O.</text>
        <dbReference type="EC" id="1.14.99.56"/>
    </reaction>
</comment>
<comment type="cofactor">
    <cofactor evidence="1">
        <name>Cu(2+)</name>
        <dbReference type="ChEBI" id="CHEBI:29036"/>
    </cofactor>
    <text evidence="1">Binds 1 copper ion per subunit.</text>
</comment>
<comment type="subcellular location">
    <subcellularLocation>
        <location evidence="4 6 7">Secreted</location>
    </subcellularLocation>
</comment>
<comment type="induction">
    <text evidence="5 7">Exclusively expressed on lignocellulosic substrates such as sugarcane straw (SCS) or steam-exploded sugarcane bagasse (SCB) (PubMed:35658600). The degenerate binding motif 5'-SYGGRG-3' that binds to creA involved in carbon catabolite repression is present in the promoter (PubMed:27075737).</text>
</comment>
<comment type="biotechnology">
    <text evidence="10">Lignocellulose is the most abundant polymeric composite on Earth and is a recalcitrant but promising renewable substrate for industrial biotechnology applications. Together with cellobiose dehydrogenases (CDHs) an enzymatic system capable of oxidative cellulose cleavage is formed, which increases the efficiency of cellulases and put LPMOs at focus of biofuel research.</text>
</comment>
<comment type="similarity">
    <text evidence="9">Belongs to the polysaccharide monooxygenase AA9 family.</text>
</comment>
<organism>
    <name type="scientific">Emericella nidulans (strain FGSC A4 / ATCC 38163 / CBS 112.46 / NRRL 194 / M139)</name>
    <name type="common">Aspergillus nidulans</name>
    <dbReference type="NCBI Taxonomy" id="227321"/>
    <lineage>
        <taxon>Eukaryota</taxon>
        <taxon>Fungi</taxon>
        <taxon>Dikarya</taxon>
        <taxon>Ascomycota</taxon>
        <taxon>Pezizomycotina</taxon>
        <taxon>Eurotiomycetes</taxon>
        <taxon>Eurotiomycetidae</taxon>
        <taxon>Eurotiales</taxon>
        <taxon>Aspergillaceae</taxon>
        <taxon>Aspergillus</taxon>
        <taxon>Aspergillus subgen. Nidulantes</taxon>
    </lineage>
</organism>
<sequence>MKSGLLFTTASLALTASAHYVFPALVQDGAATGDWKYVRDWTGSYGNGPVEDVTSLDIRCNKDASTNGNATETLPVKAGEEIGFTVRTNIGHPGPLLAYMAKAPGDASDFDGDGQVWFKIYEDGPTVTDDGLTWPSDGATNVNFTIPSSLPDGDYLLRVEHIALHGAGTEGGAQFYLSCGQVSVTGGGNGDPAPLVAFPGAYDPTDPGILINIYWPVPTNYTPPGPKVWSG</sequence>
<feature type="signal peptide" evidence="2">
    <location>
        <begin position="1"/>
        <end position="18"/>
    </location>
</feature>
<feature type="chain" id="PRO_0000460005" description="AA9 family lytic polysaccharide monooxygenase C">
    <location>
        <begin position="19"/>
        <end position="231"/>
    </location>
</feature>
<feature type="binding site" evidence="1">
    <location>
        <position position="19"/>
    </location>
    <ligand>
        <name>Cu(2+)</name>
        <dbReference type="ChEBI" id="CHEBI:29036"/>
        <note>catalytic</note>
    </ligand>
</feature>
<feature type="binding site" evidence="1">
    <location>
        <position position="165"/>
    </location>
    <ligand>
        <name>O2</name>
        <dbReference type="ChEBI" id="CHEBI:15379"/>
    </ligand>
</feature>
<feature type="binding site" evidence="1">
    <location>
        <position position="174"/>
    </location>
    <ligand>
        <name>O2</name>
        <dbReference type="ChEBI" id="CHEBI:15379"/>
    </ligand>
</feature>
<feature type="binding site" evidence="1">
    <location>
        <position position="176"/>
    </location>
    <ligand>
        <name>Cu(2+)</name>
        <dbReference type="ChEBI" id="CHEBI:29036"/>
        <note>catalytic</note>
    </ligand>
</feature>
<feature type="glycosylation site" description="N-linked (GlcNAc...) asparagine" evidence="3">
    <location>
        <position position="69"/>
    </location>
</feature>
<feature type="glycosylation site" description="N-linked (GlcNAc...) asparagine" evidence="3">
    <location>
        <position position="143"/>
    </location>
</feature>
<feature type="disulfide bond" evidence="1">
    <location>
        <begin position="60"/>
        <end position="179"/>
    </location>
</feature>
<protein>
    <recommendedName>
        <fullName evidence="8">AA9 family lytic polysaccharide monooxygenase C</fullName>
        <shortName evidence="8">LPMO9C</shortName>
        <ecNumber evidence="7">1.14.99.56</ecNumber>
    </recommendedName>
    <alternativeName>
        <fullName evidence="9">Cellulase LPMO9C</fullName>
    </alternativeName>
    <alternativeName>
        <fullName evidence="9">Endo-beta-1,4-glucanase LPMO9C</fullName>
        <shortName evidence="9">Endoglucanase LPMO9C</shortName>
    </alternativeName>
    <alternativeName>
        <fullName evidence="9">Glycosyl hydrolase 61 family protein LPMO9C</fullName>
    </alternativeName>
</protein>
<evidence type="ECO:0000250" key="1">
    <source>
        <dbReference type="UniProtKB" id="Q1K8B6"/>
    </source>
</evidence>
<evidence type="ECO:0000255" key="2"/>
<evidence type="ECO:0000255" key="3">
    <source>
        <dbReference type="PROSITE-ProRule" id="PRU00498"/>
    </source>
</evidence>
<evidence type="ECO:0000269" key="4">
    <source>
    </source>
</evidence>
<evidence type="ECO:0000269" key="5">
    <source>
    </source>
</evidence>
<evidence type="ECO:0000269" key="6">
    <source>
    </source>
</evidence>
<evidence type="ECO:0000269" key="7">
    <source>
    </source>
</evidence>
<evidence type="ECO:0000303" key="8">
    <source>
    </source>
</evidence>
<evidence type="ECO:0000305" key="9"/>
<evidence type="ECO:0000305" key="10">
    <source>
    </source>
</evidence>
<name>LP9C_EMENI</name>
<reference key="1">
    <citation type="journal article" date="2005" name="Nature">
        <title>Sequencing of Aspergillus nidulans and comparative analysis with A. fumigatus and A. oryzae.</title>
        <authorList>
            <person name="Galagan J.E."/>
            <person name="Calvo S.E."/>
            <person name="Cuomo C."/>
            <person name="Ma L.-J."/>
            <person name="Wortman J.R."/>
            <person name="Batzoglou S."/>
            <person name="Lee S.-I."/>
            <person name="Bastuerkmen M."/>
            <person name="Spevak C.C."/>
            <person name="Clutterbuck J."/>
            <person name="Kapitonov V."/>
            <person name="Jurka J."/>
            <person name="Scazzocchio C."/>
            <person name="Farman M.L."/>
            <person name="Butler J."/>
            <person name="Purcell S."/>
            <person name="Harris S."/>
            <person name="Braus G.H."/>
            <person name="Draht O."/>
            <person name="Busch S."/>
            <person name="D'Enfert C."/>
            <person name="Bouchier C."/>
            <person name="Goldman G.H."/>
            <person name="Bell-Pedersen D."/>
            <person name="Griffiths-Jones S."/>
            <person name="Doonan J.H."/>
            <person name="Yu J."/>
            <person name="Vienken K."/>
            <person name="Pain A."/>
            <person name="Freitag M."/>
            <person name="Selker E.U."/>
            <person name="Archer D.B."/>
            <person name="Penalva M.A."/>
            <person name="Oakley B.R."/>
            <person name="Momany M."/>
            <person name="Tanaka T."/>
            <person name="Kumagai T."/>
            <person name="Asai K."/>
            <person name="Machida M."/>
            <person name="Nierman W.C."/>
            <person name="Denning D.W."/>
            <person name="Caddick M.X."/>
            <person name="Hynes M."/>
            <person name="Paoletti M."/>
            <person name="Fischer R."/>
            <person name="Miller B.L."/>
            <person name="Dyer P.S."/>
            <person name="Sachs M.S."/>
            <person name="Osmani S.A."/>
            <person name="Birren B.W."/>
        </authorList>
    </citation>
    <scope>NUCLEOTIDE SEQUENCE [LARGE SCALE GENOMIC DNA]</scope>
    <source>
        <strain>FGSC A4 / ATCC 38163 / CBS 112.46 / NRRL 194 / M139</strain>
    </source>
</reference>
<reference key="2">
    <citation type="journal article" date="2009" name="Fungal Genet. Biol.">
        <title>The 2008 update of the Aspergillus nidulans genome annotation: a community effort.</title>
        <authorList>
            <person name="Wortman J.R."/>
            <person name="Gilsenan J.M."/>
            <person name="Joardar V."/>
            <person name="Deegan J."/>
            <person name="Clutterbuck J."/>
            <person name="Andersen M.R."/>
            <person name="Archer D."/>
            <person name="Bencina M."/>
            <person name="Braus G."/>
            <person name="Coutinho P."/>
            <person name="von Dohren H."/>
            <person name="Doonan J."/>
            <person name="Driessen A.J."/>
            <person name="Durek P."/>
            <person name="Espeso E."/>
            <person name="Fekete E."/>
            <person name="Flipphi M."/>
            <person name="Estrada C.G."/>
            <person name="Geysens S."/>
            <person name="Goldman G."/>
            <person name="de Groot P.W."/>
            <person name="Hansen K."/>
            <person name="Harris S.D."/>
            <person name="Heinekamp T."/>
            <person name="Helmstaedt K."/>
            <person name="Henrissat B."/>
            <person name="Hofmann G."/>
            <person name="Homan T."/>
            <person name="Horio T."/>
            <person name="Horiuchi H."/>
            <person name="James S."/>
            <person name="Jones M."/>
            <person name="Karaffa L."/>
            <person name="Karanyi Z."/>
            <person name="Kato M."/>
            <person name="Keller N."/>
            <person name="Kelly D.E."/>
            <person name="Kiel J.A."/>
            <person name="Kim J.M."/>
            <person name="van der Klei I.J."/>
            <person name="Klis F.M."/>
            <person name="Kovalchuk A."/>
            <person name="Krasevec N."/>
            <person name="Kubicek C.P."/>
            <person name="Liu B."/>
            <person name="Maccabe A."/>
            <person name="Meyer V."/>
            <person name="Mirabito P."/>
            <person name="Miskei M."/>
            <person name="Mos M."/>
            <person name="Mullins J."/>
            <person name="Nelson D.R."/>
            <person name="Nielsen J."/>
            <person name="Oakley B.R."/>
            <person name="Osmani S.A."/>
            <person name="Pakula T."/>
            <person name="Paszewski A."/>
            <person name="Paulsen I."/>
            <person name="Pilsyk S."/>
            <person name="Pocsi I."/>
            <person name="Punt P.J."/>
            <person name="Ram A.F."/>
            <person name="Ren Q."/>
            <person name="Robellet X."/>
            <person name="Robson G."/>
            <person name="Seiboth B."/>
            <person name="van Solingen P."/>
            <person name="Specht T."/>
            <person name="Sun J."/>
            <person name="Taheri-Talesh N."/>
            <person name="Takeshita N."/>
            <person name="Ussery D."/>
            <person name="vanKuyk P.A."/>
            <person name="Visser H."/>
            <person name="van de Vondervoort P.J."/>
            <person name="de Vries R.P."/>
            <person name="Walton J."/>
            <person name="Xiang X."/>
            <person name="Xiong Y."/>
            <person name="Zeng A.P."/>
            <person name="Brandt B.W."/>
            <person name="Cornell M.J."/>
            <person name="van den Hondel C.A."/>
            <person name="Visser J."/>
            <person name="Oliver S.G."/>
            <person name="Turner G."/>
        </authorList>
    </citation>
    <scope>GENOME REANNOTATION</scope>
    <source>
        <strain>FGSC A4 / ATCC 38163 / CBS 112.46 / NRRL 194 / M139</strain>
    </source>
</reference>
<reference key="3">
    <citation type="journal article" date="2012" name="Biotechnol. Biofuels">
        <title>A time course analysis of the extracellular proteome of Aspergillus nidulans growing on sorghum stover.</title>
        <authorList>
            <person name="Saykhedkar S."/>
            <person name="Ray A."/>
            <person name="Ayoubi-Canaan P."/>
            <person name="Hartson S.D."/>
            <person name="Prade R."/>
            <person name="Mort A.J."/>
        </authorList>
    </citation>
    <scope>SUBCELLULAR LOCATION</scope>
</reference>
<reference key="4">
    <citation type="journal article" date="2016" name="Appl. Microbiol. Biotechnol.">
        <title>A family of AA9 lytic polysaccharide monooxygenases in Aspergillus nidulans is differentially regulated by multiple substrates and at least one is active on cellulose and xyloglucan.</title>
        <authorList>
            <person name="Jagadeeswaran G."/>
            <person name="Gainey L."/>
            <person name="Prade R."/>
            <person name="Mort A.J."/>
        </authorList>
    </citation>
    <scope>FUNCTION</scope>
    <scope>INDUCTION</scope>
    <scope>BIOTECHNOLOGY</scope>
</reference>
<reference key="5">
    <citation type="journal article" date="2016" name="Biotechnol. Biofuels">
        <title>Lytic polysaccharide monooxygenases and other oxidative enzymes are abundantly secreted by Aspergillus nidulans grown on different starches.</title>
        <authorList>
            <person name="Nekiunaite L."/>
            <person name="Arntzen M.O."/>
            <person name="Svensson B."/>
            <person name="Vaaje-Kolstad G."/>
            <person name="Abou Hachem M."/>
        </authorList>
    </citation>
    <scope>IDENTIFICATION</scope>
    <scope>SUBCELLULAR LOCATION</scope>
</reference>
<reference key="6">
    <citation type="journal article" date="2022" name="Microbiol. Spectr.">
        <title>Deletion of AA9 Lytic Polysaccharide Monooxygenases Impacts A. nidulans Secretome and Growth on Lignocellulose.</title>
        <authorList>
            <person name="Terrasan C.R.F."/>
            <person name="Rubio M.V."/>
            <person name="Gerhardt J.A."/>
            <person name="Cairo J.P.F."/>
            <person name="Contesini F.J."/>
            <person name="Zubieta M.P."/>
            <person name="Figueiredo F.L."/>
            <person name="Valadares F.L."/>
            <person name="Correa T.L.R."/>
            <person name="Murakami M.T."/>
            <person name="Franco T.T."/>
            <person name="Davies G.J."/>
            <person name="Walton P.H."/>
            <person name="Damasio A."/>
        </authorList>
    </citation>
    <scope>FUNCTION</scope>
    <scope>CATALYTIC ACTIVITY</scope>
    <scope>SUBCELLULAR LOCATION</scope>
    <scope>INDUCTION</scope>
</reference>
<proteinExistence type="evidence at protein level"/>
<gene>
    <name evidence="8" type="primary">LPMO9C</name>
    <name type="ORF">AN6428</name>
    <name type="ORF">ANIA_06428</name>
</gene>
<dbReference type="EC" id="1.14.99.56" evidence="7"/>
<dbReference type="EMBL" id="BN001301">
    <property type="protein sequence ID" value="CBF69492.1"/>
    <property type="molecule type" value="Genomic_DNA"/>
</dbReference>
<dbReference type="RefSeq" id="XP_664032.1">
    <property type="nucleotide sequence ID" value="XM_658940.1"/>
</dbReference>
<dbReference type="PDB" id="8B7P">
    <property type="method" value="X-ray"/>
    <property type="resolution" value="2.11 A"/>
    <property type="chains" value="AAA/BBB/CCC/DDD=19-231"/>
</dbReference>
<dbReference type="PDBsum" id="8B7P"/>
<dbReference type="SMR" id="Q5AZ52"/>
<dbReference type="STRING" id="227321.Q5AZ52"/>
<dbReference type="CAZy" id="AA9">
    <property type="family name" value="Auxiliary Activities 9"/>
</dbReference>
<dbReference type="EnsemblFungi" id="CBF69492">
    <property type="protein sequence ID" value="CBF69492"/>
    <property type="gene ID" value="ANIA_06428"/>
</dbReference>
<dbReference type="GeneID" id="2871327"/>
<dbReference type="KEGG" id="ani:ANIA_06428"/>
<dbReference type="VEuPathDB" id="FungiDB:AN6428"/>
<dbReference type="eggNOG" id="ENOG502RYSN">
    <property type="taxonomic scope" value="Eukaryota"/>
</dbReference>
<dbReference type="HOGENOM" id="CLU_031730_4_2_1"/>
<dbReference type="InParanoid" id="Q5AZ52"/>
<dbReference type="OMA" id="HFYMAKV"/>
<dbReference type="OrthoDB" id="3496539at2759"/>
<dbReference type="Proteomes" id="UP000000560">
    <property type="component" value="Chromosome I"/>
</dbReference>
<dbReference type="GO" id="GO:0005576">
    <property type="term" value="C:extracellular region"/>
    <property type="evidence" value="ECO:0007669"/>
    <property type="project" value="UniProtKB-SubCell"/>
</dbReference>
<dbReference type="GO" id="GO:0046872">
    <property type="term" value="F:metal ion binding"/>
    <property type="evidence" value="ECO:0007669"/>
    <property type="project" value="UniProtKB-KW"/>
</dbReference>
<dbReference type="GO" id="GO:0004497">
    <property type="term" value="F:monooxygenase activity"/>
    <property type="evidence" value="ECO:0007669"/>
    <property type="project" value="UniProtKB-KW"/>
</dbReference>
<dbReference type="GO" id="GO:0030245">
    <property type="term" value="P:cellulose catabolic process"/>
    <property type="evidence" value="ECO:0007669"/>
    <property type="project" value="UniProtKB-KW"/>
</dbReference>
<dbReference type="CDD" id="cd21175">
    <property type="entry name" value="LPMO_AA9"/>
    <property type="match status" value="1"/>
</dbReference>
<dbReference type="Gene3D" id="2.70.50.70">
    <property type="match status" value="1"/>
</dbReference>
<dbReference type="InterPro" id="IPR049892">
    <property type="entry name" value="AA9"/>
</dbReference>
<dbReference type="InterPro" id="IPR005103">
    <property type="entry name" value="AA9_LPMO"/>
</dbReference>
<dbReference type="PANTHER" id="PTHR33353:SF10">
    <property type="entry name" value="ENDO-BETA-1,4-GLUCANASE D"/>
    <property type="match status" value="1"/>
</dbReference>
<dbReference type="PANTHER" id="PTHR33353">
    <property type="entry name" value="PUTATIVE (AFU_ORTHOLOGUE AFUA_1G12560)-RELATED"/>
    <property type="match status" value="1"/>
</dbReference>
<dbReference type="Pfam" id="PF03443">
    <property type="entry name" value="AA9"/>
    <property type="match status" value="1"/>
</dbReference>
<keyword id="KW-0002">3D-structure</keyword>
<keyword id="KW-0119">Carbohydrate metabolism</keyword>
<keyword id="KW-0136">Cellulose degradation</keyword>
<keyword id="KW-0186">Copper</keyword>
<keyword id="KW-1015">Disulfide bond</keyword>
<keyword id="KW-0325">Glycoprotein</keyword>
<keyword id="KW-0479">Metal-binding</keyword>
<keyword id="KW-0503">Monooxygenase</keyword>
<keyword id="KW-0560">Oxidoreductase</keyword>
<keyword id="KW-0624">Polysaccharide degradation</keyword>
<keyword id="KW-1185">Reference proteome</keyword>
<keyword id="KW-0964">Secreted</keyword>
<keyword id="KW-0732">Signal</keyword>
<accession>Q5AZ52</accession>
<accession>C8V0F9</accession>